<comment type="function">
    <text evidence="1">This protein binds specifically to 23S rRNA; its binding is stimulated by other ribosomal proteins, e.g. L4, L17, and L20. It is important during the early stages of 50S assembly. It makes multiple contacts with different domains of the 23S rRNA in the assembled 50S subunit and ribosome (By similarity).</text>
</comment>
<comment type="function">
    <text evidence="1">The globular domain of the protein is located near the polypeptide exit tunnel on the outside of the subunit, while an extended beta-hairpin is found that lines the wall of the exit tunnel in the center of the 70S ribosome.</text>
</comment>
<comment type="subunit">
    <text evidence="1">Part of the 50S ribosomal subunit.</text>
</comment>
<comment type="similarity">
    <text evidence="1">Belongs to the universal ribosomal protein uL22 family.</text>
</comment>
<proteinExistence type="inferred from homology"/>
<gene>
    <name evidence="1" type="primary">rplV</name>
    <name type="ordered locus">BAD_0326</name>
</gene>
<sequence>MEAKAIARHVRVTPRKARRMVDLIRGKKATEAITILKFAPQDASLPVRKVLESAIANARVKADKAGEPFRENDLVVKETYVDEGVTLKRFRARAQGRAARINKRTSHITVVVANKEGNR</sequence>
<dbReference type="EMBL" id="AP009256">
    <property type="protein sequence ID" value="BAF39107.1"/>
    <property type="molecule type" value="Genomic_DNA"/>
</dbReference>
<dbReference type="RefSeq" id="WP_003808026.1">
    <property type="nucleotide sequence ID" value="NZ_CAXVNC010000001.1"/>
</dbReference>
<dbReference type="SMR" id="A1A074"/>
<dbReference type="STRING" id="367928.BAD_0326"/>
<dbReference type="PaxDb" id="1680-BADO_0333"/>
<dbReference type="GeneID" id="45598859"/>
<dbReference type="KEGG" id="bad:BAD_0326"/>
<dbReference type="HOGENOM" id="CLU_083987_3_3_11"/>
<dbReference type="Proteomes" id="UP000008702">
    <property type="component" value="Chromosome"/>
</dbReference>
<dbReference type="GO" id="GO:0022625">
    <property type="term" value="C:cytosolic large ribosomal subunit"/>
    <property type="evidence" value="ECO:0007669"/>
    <property type="project" value="TreeGrafter"/>
</dbReference>
<dbReference type="GO" id="GO:0019843">
    <property type="term" value="F:rRNA binding"/>
    <property type="evidence" value="ECO:0007669"/>
    <property type="project" value="UniProtKB-UniRule"/>
</dbReference>
<dbReference type="GO" id="GO:0003735">
    <property type="term" value="F:structural constituent of ribosome"/>
    <property type="evidence" value="ECO:0007669"/>
    <property type="project" value="InterPro"/>
</dbReference>
<dbReference type="GO" id="GO:0006412">
    <property type="term" value="P:translation"/>
    <property type="evidence" value="ECO:0007669"/>
    <property type="project" value="UniProtKB-UniRule"/>
</dbReference>
<dbReference type="CDD" id="cd00336">
    <property type="entry name" value="Ribosomal_L22"/>
    <property type="match status" value="1"/>
</dbReference>
<dbReference type="Gene3D" id="3.90.470.10">
    <property type="entry name" value="Ribosomal protein L22/L17"/>
    <property type="match status" value="1"/>
</dbReference>
<dbReference type="HAMAP" id="MF_01331_B">
    <property type="entry name" value="Ribosomal_uL22_B"/>
    <property type="match status" value="1"/>
</dbReference>
<dbReference type="InterPro" id="IPR001063">
    <property type="entry name" value="Ribosomal_uL22"/>
</dbReference>
<dbReference type="InterPro" id="IPR005727">
    <property type="entry name" value="Ribosomal_uL22_bac/chlpt-type"/>
</dbReference>
<dbReference type="InterPro" id="IPR047867">
    <property type="entry name" value="Ribosomal_uL22_bac/org-type"/>
</dbReference>
<dbReference type="InterPro" id="IPR018260">
    <property type="entry name" value="Ribosomal_uL22_CS"/>
</dbReference>
<dbReference type="InterPro" id="IPR036394">
    <property type="entry name" value="Ribosomal_uL22_sf"/>
</dbReference>
<dbReference type="NCBIfam" id="TIGR01044">
    <property type="entry name" value="rplV_bact"/>
    <property type="match status" value="1"/>
</dbReference>
<dbReference type="PANTHER" id="PTHR13501">
    <property type="entry name" value="CHLOROPLAST 50S RIBOSOMAL PROTEIN L22-RELATED"/>
    <property type="match status" value="1"/>
</dbReference>
<dbReference type="PANTHER" id="PTHR13501:SF8">
    <property type="entry name" value="LARGE RIBOSOMAL SUBUNIT PROTEIN UL22M"/>
    <property type="match status" value="1"/>
</dbReference>
<dbReference type="Pfam" id="PF00237">
    <property type="entry name" value="Ribosomal_L22"/>
    <property type="match status" value="1"/>
</dbReference>
<dbReference type="SUPFAM" id="SSF54843">
    <property type="entry name" value="Ribosomal protein L22"/>
    <property type="match status" value="1"/>
</dbReference>
<dbReference type="PROSITE" id="PS00464">
    <property type="entry name" value="RIBOSOMAL_L22"/>
    <property type="match status" value="1"/>
</dbReference>
<evidence type="ECO:0000255" key="1">
    <source>
        <dbReference type="HAMAP-Rule" id="MF_01331"/>
    </source>
</evidence>
<evidence type="ECO:0000305" key="2"/>
<protein>
    <recommendedName>
        <fullName evidence="1">Large ribosomal subunit protein uL22</fullName>
    </recommendedName>
    <alternativeName>
        <fullName evidence="2">50S ribosomal protein L22</fullName>
    </alternativeName>
</protein>
<keyword id="KW-1185">Reference proteome</keyword>
<keyword id="KW-0687">Ribonucleoprotein</keyword>
<keyword id="KW-0689">Ribosomal protein</keyword>
<keyword id="KW-0694">RNA-binding</keyword>
<keyword id="KW-0699">rRNA-binding</keyword>
<reference key="1">
    <citation type="submission" date="2006-12" db="EMBL/GenBank/DDBJ databases">
        <title>Bifidobacterium adolescentis complete genome sequence.</title>
        <authorList>
            <person name="Suzuki T."/>
            <person name="Tsuda Y."/>
            <person name="Kanou N."/>
            <person name="Inoue T."/>
            <person name="Kumazaki K."/>
            <person name="Nagano S."/>
            <person name="Hirai S."/>
            <person name="Tanaka K."/>
            <person name="Watanabe K."/>
        </authorList>
    </citation>
    <scope>NUCLEOTIDE SEQUENCE [LARGE SCALE GENOMIC DNA]</scope>
    <source>
        <strain>ATCC 15703 / DSM 20083 / NCTC 11814 / E194a</strain>
    </source>
</reference>
<organism>
    <name type="scientific">Bifidobacterium adolescentis (strain ATCC 15703 / DSM 20083 / NCTC 11814 / E194a)</name>
    <dbReference type="NCBI Taxonomy" id="367928"/>
    <lineage>
        <taxon>Bacteria</taxon>
        <taxon>Bacillati</taxon>
        <taxon>Actinomycetota</taxon>
        <taxon>Actinomycetes</taxon>
        <taxon>Bifidobacteriales</taxon>
        <taxon>Bifidobacteriaceae</taxon>
        <taxon>Bifidobacterium</taxon>
    </lineage>
</organism>
<feature type="chain" id="PRO_1000052541" description="Large ribosomal subunit protein uL22">
    <location>
        <begin position="1"/>
        <end position="119"/>
    </location>
</feature>
<name>RL22_BIFAA</name>
<accession>A1A074</accession>